<evidence type="ECO:0000250" key="1">
    <source>
        <dbReference type="UniProtKB" id="Q2YN92"/>
    </source>
</evidence>
<evidence type="ECO:0000269" key="2">
    <source>
    </source>
</evidence>
<evidence type="ECO:0000305" key="3">
    <source>
    </source>
</evidence>
<evidence type="ECO:0000305" key="4">
    <source>
    </source>
</evidence>
<evidence type="ECO:0007829" key="5">
    <source>
        <dbReference type="PDB" id="1KZL"/>
    </source>
</evidence>
<gene>
    <name type="primary">rib5</name>
    <name type="ORF">SPCC1450.13c</name>
</gene>
<sequence length="208" mass="22861">MFTGLVEAIGVVKDVQGTIDNGFAMKIEAPQILDDCHTGDSIAVNGTCLTVTDFDRYHFTVGIAPESLRLTNLGQCKAGDPVNLERAVLSSTRMGGHFVQGHVDTVAEIVEKKQDGEAIDFTFRPRDPFVLKYIVYKGYIALDGTSLTITHVDDSTFSIMMISYTQSKVIMAKKNVGDLVNVEVDQIGKYTEKLVEAHIADWIKKTQA</sequence>
<keyword id="KW-0002">3D-structure</keyword>
<keyword id="KW-1185">Reference proteome</keyword>
<keyword id="KW-0677">Repeat</keyword>
<keyword id="KW-0686">Riboflavin biosynthesis</keyword>
<keyword id="KW-0808">Transferase</keyword>
<dbReference type="EC" id="2.5.1.9" evidence="2"/>
<dbReference type="EMBL" id="AF505789">
    <property type="protein sequence ID" value="AAM28201.1"/>
    <property type="molecule type" value="mRNA"/>
</dbReference>
<dbReference type="EMBL" id="CU329672">
    <property type="protein sequence ID" value="CAB40180.1"/>
    <property type="molecule type" value="Genomic_DNA"/>
</dbReference>
<dbReference type="PIR" id="T40995">
    <property type="entry name" value="T40995"/>
</dbReference>
<dbReference type="RefSeq" id="NP_588312.1">
    <property type="nucleotide sequence ID" value="NM_001023302.2"/>
</dbReference>
<dbReference type="PDB" id="1KZL">
    <property type="method" value="X-ray"/>
    <property type="resolution" value="2.10 A"/>
    <property type="chains" value="A=1-208"/>
</dbReference>
<dbReference type="PDBsum" id="1KZL"/>
<dbReference type="SMR" id="Q9Y7P0"/>
<dbReference type="BioGRID" id="275754">
    <property type="interactions" value="1"/>
</dbReference>
<dbReference type="FunCoup" id="Q9Y7P0">
    <property type="interactions" value="135"/>
</dbReference>
<dbReference type="STRING" id="284812.Q9Y7P0"/>
<dbReference type="PaxDb" id="4896-SPCC1450.13c.1"/>
<dbReference type="EnsemblFungi" id="SPCC1450.13c.1">
    <property type="protein sequence ID" value="SPCC1450.13c.1:pep"/>
    <property type="gene ID" value="SPCC1450.13c"/>
</dbReference>
<dbReference type="GeneID" id="2539183"/>
<dbReference type="KEGG" id="spo:2539183"/>
<dbReference type="PomBase" id="SPCC1450.13c">
    <property type="gene designation" value="rib5"/>
</dbReference>
<dbReference type="VEuPathDB" id="FungiDB:SPCC1450.13c"/>
<dbReference type="eggNOG" id="KOG3310">
    <property type="taxonomic scope" value="Eukaryota"/>
</dbReference>
<dbReference type="HOGENOM" id="CLU_034388_1_1_1"/>
<dbReference type="InParanoid" id="Q9Y7P0"/>
<dbReference type="OMA" id="IGGHAMS"/>
<dbReference type="PhylomeDB" id="Q9Y7P0"/>
<dbReference type="BRENDA" id="2.5.1.9">
    <property type="organism ID" value="5613"/>
</dbReference>
<dbReference type="UniPathway" id="UPA00275">
    <property type="reaction ID" value="UER00405"/>
</dbReference>
<dbReference type="EvolutionaryTrace" id="Q9Y7P0"/>
<dbReference type="PRO" id="PR:Q9Y7P0"/>
<dbReference type="Proteomes" id="UP000002485">
    <property type="component" value="Chromosome III"/>
</dbReference>
<dbReference type="GO" id="GO:0005829">
    <property type="term" value="C:cytosol"/>
    <property type="evidence" value="ECO:0007005"/>
    <property type="project" value="PomBase"/>
</dbReference>
<dbReference type="GO" id="GO:0005634">
    <property type="term" value="C:nucleus"/>
    <property type="evidence" value="ECO:0007005"/>
    <property type="project" value="PomBase"/>
</dbReference>
<dbReference type="GO" id="GO:0004746">
    <property type="term" value="F:riboflavin synthase activity"/>
    <property type="evidence" value="ECO:0000318"/>
    <property type="project" value="GO_Central"/>
</dbReference>
<dbReference type="GO" id="GO:0009231">
    <property type="term" value="P:riboflavin biosynthetic process"/>
    <property type="evidence" value="ECO:0000318"/>
    <property type="project" value="GO_Central"/>
</dbReference>
<dbReference type="CDD" id="cd00402">
    <property type="entry name" value="Riboflavin_synthase_like"/>
    <property type="match status" value="1"/>
</dbReference>
<dbReference type="FunFam" id="2.40.30.20:FF:000004">
    <property type="entry name" value="Riboflavin synthase, alpha subunit"/>
    <property type="match status" value="1"/>
</dbReference>
<dbReference type="FunFam" id="2.40.30.20:FF:000006">
    <property type="entry name" value="Riboflavin synthase, alpha subunit"/>
    <property type="match status" value="1"/>
</dbReference>
<dbReference type="Gene3D" id="2.40.30.20">
    <property type="match status" value="2"/>
</dbReference>
<dbReference type="InterPro" id="IPR023366">
    <property type="entry name" value="ATP_synth_asu-like_sf"/>
</dbReference>
<dbReference type="InterPro" id="IPR001783">
    <property type="entry name" value="Lumazine-bd"/>
</dbReference>
<dbReference type="InterPro" id="IPR026017">
    <property type="entry name" value="Lumazine-bd_dom"/>
</dbReference>
<dbReference type="InterPro" id="IPR017938">
    <property type="entry name" value="Riboflavin_synthase-like_b-brl"/>
</dbReference>
<dbReference type="NCBIfam" id="NF006767">
    <property type="entry name" value="PRK09289.1"/>
    <property type="match status" value="1"/>
</dbReference>
<dbReference type="NCBIfam" id="TIGR00187">
    <property type="entry name" value="ribE"/>
    <property type="match status" value="1"/>
</dbReference>
<dbReference type="PANTHER" id="PTHR21098:SF0">
    <property type="entry name" value="RIBOFLAVIN SYNTHASE"/>
    <property type="match status" value="1"/>
</dbReference>
<dbReference type="PANTHER" id="PTHR21098">
    <property type="entry name" value="RIBOFLAVIN SYNTHASE ALPHA CHAIN"/>
    <property type="match status" value="1"/>
</dbReference>
<dbReference type="Pfam" id="PF00677">
    <property type="entry name" value="Lum_binding"/>
    <property type="match status" value="2"/>
</dbReference>
<dbReference type="PIRSF" id="PIRSF000498">
    <property type="entry name" value="Riboflavin_syn_A"/>
    <property type="match status" value="1"/>
</dbReference>
<dbReference type="SUPFAM" id="SSF63380">
    <property type="entry name" value="Riboflavin synthase domain-like"/>
    <property type="match status" value="2"/>
</dbReference>
<dbReference type="PROSITE" id="PS51177">
    <property type="entry name" value="LUMAZINE_BIND"/>
    <property type="match status" value="2"/>
</dbReference>
<organism>
    <name type="scientific">Schizosaccharomyces pombe (strain 972 / ATCC 24843)</name>
    <name type="common">Fission yeast</name>
    <dbReference type="NCBI Taxonomy" id="284812"/>
    <lineage>
        <taxon>Eukaryota</taxon>
        <taxon>Fungi</taxon>
        <taxon>Dikarya</taxon>
        <taxon>Ascomycota</taxon>
        <taxon>Taphrinomycotina</taxon>
        <taxon>Schizosaccharomycetes</taxon>
        <taxon>Schizosaccharomycetales</taxon>
        <taxon>Schizosaccharomycetaceae</taxon>
        <taxon>Schizosaccharomyces</taxon>
    </lineage>
</organism>
<name>RISA_SCHPO</name>
<accession>Q9Y7P0</accession>
<proteinExistence type="evidence at protein level"/>
<protein>
    <recommendedName>
        <fullName>Riboflavin synthase</fullName>
        <shortName>RS</shortName>
        <ecNumber evidence="2">2.5.1.9</ecNumber>
    </recommendedName>
</protein>
<feature type="chain" id="PRO_0000068173" description="Riboflavin synthase">
    <location>
        <begin position="1"/>
        <end position="208"/>
    </location>
</feature>
<feature type="repeat" description="Lumazine-binding 1">
    <location>
        <begin position="1"/>
        <end position="97"/>
    </location>
</feature>
<feature type="repeat" description="Lumazine-binding 2">
    <location>
        <begin position="98"/>
        <end position="195"/>
    </location>
</feature>
<feature type="binding site" evidence="3">
    <location>
        <begin position="4"/>
        <end position="6"/>
    </location>
    <ligand>
        <name>2,4-dihydroxypteridine</name>
        <dbReference type="ChEBI" id="CHEBI:16489"/>
        <label>1</label>
    </ligand>
</feature>
<feature type="binding site" evidence="3">
    <location>
        <begin position="48"/>
        <end position="50"/>
    </location>
    <ligand>
        <name>2,4-dihydroxypteridine</name>
        <dbReference type="ChEBI" id="CHEBI:16489"/>
        <label>2</label>
        <note>ligand shared between two trimeric partners</note>
    </ligand>
</feature>
<feature type="binding site" evidence="3">
    <location>
        <begin position="62"/>
        <end position="67"/>
    </location>
    <ligand>
        <name>2,4-dihydroxypteridine</name>
        <dbReference type="ChEBI" id="CHEBI:16489"/>
        <label>2</label>
        <note>ligand shared between two trimeric partners</note>
    </ligand>
</feature>
<feature type="binding site" evidence="3">
    <location>
        <begin position="101"/>
        <end position="103"/>
    </location>
    <ligand>
        <name>2,4-dihydroxypteridine</name>
        <dbReference type="ChEBI" id="CHEBI:16489"/>
        <label>2</label>
        <note>ligand shared between two trimeric partners</note>
    </ligand>
</feature>
<feature type="binding site" description="in other chain" evidence="1">
    <location>
        <position position="137"/>
    </location>
    <ligand>
        <name>2,4-dihydroxypteridine</name>
        <dbReference type="ChEBI" id="CHEBI:16489"/>
        <label>2</label>
        <note>ligand shared between two trimeric partners</note>
    </ligand>
</feature>
<feature type="binding site" evidence="3">
    <location>
        <begin position="146"/>
        <end position="148"/>
    </location>
    <ligand>
        <name>2,4-dihydroxypteridine</name>
        <dbReference type="ChEBI" id="CHEBI:16489"/>
        <label>1</label>
    </ligand>
</feature>
<feature type="binding site" evidence="3">
    <location>
        <begin position="160"/>
        <end position="165"/>
    </location>
    <ligand>
        <name>2,4-dihydroxypteridine</name>
        <dbReference type="ChEBI" id="CHEBI:16489"/>
        <label>1</label>
    </ligand>
</feature>
<feature type="strand" evidence="5">
    <location>
        <begin position="8"/>
        <end position="18"/>
    </location>
</feature>
<feature type="turn" evidence="5">
    <location>
        <begin position="19"/>
        <end position="21"/>
    </location>
</feature>
<feature type="strand" evidence="5">
    <location>
        <begin position="22"/>
        <end position="28"/>
    </location>
</feature>
<feature type="helix" evidence="5">
    <location>
        <begin position="30"/>
        <end position="32"/>
    </location>
</feature>
<feature type="strand" evidence="5">
    <location>
        <begin position="41"/>
        <end position="44"/>
    </location>
</feature>
<feature type="strand" evidence="5">
    <location>
        <begin position="47"/>
        <end position="54"/>
    </location>
</feature>
<feature type="strand" evidence="5">
    <location>
        <begin position="56"/>
        <end position="63"/>
    </location>
</feature>
<feature type="helix" evidence="5">
    <location>
        <begin position="65"/>
        <end position="70"/>
    </location>
</feature>
<feature type="helix" evidence="5">
    <location>
        <begin position="73"/>
        <end position="75"/>
    </location>
</feature>
<feature type="strand" evidence="5">
    <location>
        <begin position="81"/>
        <end position="86"/>
    </location>
</feature>
<feature type="strand" evidence="5">
    <location>
        <begin position="94"/>
        <end position="96"/>
    </location>
</feature>
<feature type="strand" evidence="5">
    <location>
        <begin position="105"/>
        <end position="115"/>
    </location>
</feature>
<feature type="strand" evidence="5">
    <location>
        <begin position="118"/>
        <end position="127"/>
    </location>
</feature>
<feature type="helix" evidence="5">
    <location>
        <begin position="128"/>
        <end position="133"/>
    </location>
</feature>
<feature type="strand" evidence="5">
    <location>
        <begin position="139"/>
        <end position="142"/>
    </location>
</feature>
<feature type="strand" evidence="5">
    <location>
        <begin position="145"/>
        <end position="152"/>
    </location>
</feature>
<feature type="strand" evidence="5">
    <location>
        <begin position="157"/>
        <end position="161"/>
    </location>
</feature>
<feature type="helix" evidence="5">
    <location>
        <begin position="163"/>
        <end position="166"/>
    </location>
</feature>
<feature type="helix" evidence="5">
    <location>
        <begin position="170"/>
        <end position="173"/>
    </location>
</feature>
<feature type="strand" evidence="5">
    <location>
        <begin position="179"/>
        <end position="184"/>
    </location>
</feature>
<feature type="helix" evidence="5">
    <location>
        <begin position="187"/>
        <end position="198"/>
    </location>
</feature>
<feature type="turn" evidence="5">
    <location>
        <begin position="199"/>
        <end position="201"/>
    </location>
</feature>
<reference key="1">
    <citation type="journal article" date="2003" name="BMC Biochem.">
        <title>Riboflavin synthase of Schizosaccharomyces pombe. Protein dynamics revealed by 19F NMR protein perturbation experiments.</title>
        <authorList>
            <person name="Fischer M."/>
            <person name="Schott A.-K."/>
            <person name="Kemter K."/>
            <person name="Feicht R."/>
            <person name="Richter G."/>
            <person name="Illarionov B."/>
            <person name="Eisenreich W."/>
            <person name="Gerhardt S."/>
            <person name="Cushman M."/>
            <person name="Steinbacher S."/>
            <person name="Huber R."/>
            <person name="Bacher A."/>
        </authorList>
    </citation>
    <scope>NUCLEOTIDE SEQUENCE [MRNA]</scope>
    <scope>FUNCTION</scope>
    <scope>CATALYTIC ACTIVITY</scope>
    <scope>BIOPHYSICOCHEMICAL PROPERTIES</scope>
    <scope>PATHWAY</scope>
    <scope>SUBUNIT</scope>
</reference>
<reference key="2">
    <citation type="journal article" date="2002" name="Nature">
        <title>The genome sequence of Schizosaccharomyces pombe.</title>
        <authorList>
            <person name="Wood V."/>
            <person name="Gwilliam R."/>
            <person name="Rajandream M.A."/>
            <person name="Lyne M.H."/>
            <person name="Lyne R."/>
            <person name="Stewart A."/>
            <person name="Sgouros J.G."/>
            <person name="Peat N."/>
            <person name="Hayles J."/>
            <person name="Baker S.G."/>
            <person name="Basham D."/>
            <person name="Bowman S."/>
            <person name="Brooks K."/>
            <person name="Brown D."/>
            <person name="Brown S."/>
            <person name="Chillingworth T."/>
            <person name="Churcher C.M."/>
            <person name="Collins M."/>
            <person name="Connor R."/>
            <person name="Cronin A."/>
            <person name="Davis P."/>
            <person name="Feltwell T."/>
            <person name="Fraser A."/>
            <person name="Gentles S."/>
            <person name="Goble A."/>
            <person name="Hamlin N."/>
            <person name="Harris D.E."/>
            <person name="Hidalgo J."/>
            <person name="Hodgson G."/>
            <person name="Holroyd S."/>
            <person name="Hornsby T."/>
            <person name="Howarth S."/>
            <person name="Huckle E.J."/>
            <person name="Hunt S."/>
            <person name="Jagels K."/>
            <person name="James K.D."/>
            <person name="Jones L."/>
            <person name="Jones M."/>
            <person name="Leather S."/>
            <person name="McDonald S."/>
            <person name="McLean J."/>
            <person name="Mooney P."/>
            <person name="Moule S."/>
            <person name="Mungall K.L."/>
            <person name="Murphy L.D."/>
            <person name="Niblett D."/>
            <person name="Odell C."/>
            <person name="Oliver K."/>
            <person name="O'Neil S."/>
            <person name="Pearson D."/>
            <person name="Quail M.A."/>
            <person name="Rabbinowitsch E."/>
            <person name="Rutherford K.M."/>
            <person name="Rutter S."/>
            <person name="Saunders D."/>
            <person name="Seeger K."/>
            <person name="Sharp S."/>
            <person name="Skelton J."/>
            <person name="Simmonds M.N."/>
            <person name="Squares R."/>
            <person name="Squares S."/>
            <person name="Stevens K."/>
            <person name="Taylor K."/>
            <person name="Taylor R.G."/>
            <person name="Tivey A."/>
            <person name="Walsh S.V."/>
            <person name="Warren T."/>
            <person name="Whitehead S."/>
            <person name="Woodward J.R."/>
            <person name="Volckaert G."/>
            <person name="Aert R."/>
            <person name="Robben J."/>
            <person name="Grymonprez B."/>
            <person name="Weltjens I."/>
            <person name="Vanstreels E."/>
            <person name="Rieger M."/>
            <person name="Schaefer M."/>
            <person name="Mueller-Auer S."/>
            <person name="Gabel C."/>
            <person name="Fuchs M."/>
            <person name="Duesterhoeft A."/>
            <person name="Fritzc C."/>
            <person name="Holzer E."/>
            <person name="Moestl D."/>
            <person name="Hilbert H."/>
            <person name="Borzym K."/>
            <person name="Langer I."/>
            <person name="Beck A."/>
            <person name="Lehrach H."/>
            <person name="Reinhardt R."/>
            <person name="Pohl T.M."/>
            <person name="Eger P."/>
            <person name="Zimmermann W."/>
            <person name="Wedler H."/>
            <person name="Wambutt R."/>
            <person name="Purnelle B."/>
            <person name="Goffeau A."/>
            <person name="Cadieu E."/>
            <person name="Dreano S."/>
            <person name="Gloux S."/>
            <person name="Lelaure V."/>
            <person name="Mottier S."/>
            <person name="Galibert F."/>
            <person name="Aves S.J."/>
            <person name="Xiang Z."/>
            <person name="Hunt C."/>
            <person name="Moore K."/>
            <person name="Hurst S.M."/>
            <person name="Lucas M."/>
            <person name="Rochet M."/>
            <person name="Gaillardin C."/>
            <person name="Tallada V.A."/>
            <person name="Garzon A."/>
            <person name="Thode G."/>
            <person name="Daga R.R."/>
            <person name="Cruzado L."/>
            <person name="Jimenez J."/>
            <person name="Sanchez M."/>
            <person name="del Rey F."/>
            <person name="Benito J."/>
            <person name="Dominguez A."/>
            <person name="Revuelta J.L."/>
            <person name="Moreno S."/>
            <person name="Armstrong J."/>
            <person name="Forsburg S.L."/>
            <person name="Cerutti L."/>
            <person name="Lowe T."/>
            <person name="McCombie W.R."/>
            <person name="Paulsen I."/>
            <person name="Potashkin J."/>
            <person name="Shpakovski G.V."/>
            <person name="Ussery D."/>
            <person name="Barrell B.G."/>
            <person name="Nurse P."/>
        </authorList>
    </citation>
    <scope>NUCLEOTIDE SEQUENCE [LARGE SCALE GENOMIC DNA]</scope>
    <source>
        <strain>972 / ATCC 24843</strain>
    </source>
</reference>
<reference key="3">
    <citation type="journal article" date="2002" name="Structure">
        <title>Studies on the reaction mechanism of riboflavin synthase: X-ray crystal structure of a complex with 6-carboxyethyl-7-oxo-8-ribityllumazine.</title>
        <authorList>
            <person name="Gerhardt S."/>
            <person name="Schott A.-K."/>
            <person name="Kairies N."/>
            <person name="Cushman M."/>
            <person name="Illarionov B."/>
            <person name="Eisenreich W."/>
            <person name="Bacher A."/>
            <person name="Huber R."/>
            <person name="Steinbacher S."/>
            <person name="Fischer M."/>
        </authorList>
    </citation>
    <scope>X-RAY CRYSTALLOGRAPHY (2.1 ANGSTROMS) IN COMPLEX WITH THE SUBSTRATE ANALOG 6-CARBOXYETHYL-7-OXO-8-RIBITYLLUMAZINE</scope>
</reference>
<comment type="function">
    <text evidence="2">Catalyzes the dismutation of two molecules of 6,7-dimethyl-8-ribityllumazine, resulting in the formation of riboflavin and 5-amino-6-(D-ribitylamino)uracil.</text>
</comment>
<comment type="catalytic activity">
    <reaction evidence="2">
        <text>2 6,7-dimethyl-8-(1-D-ribityl)lumazine + H(+) = 5-amino-6-(D-ribitylamino)uracil + riboflavin</text>
        <dbReference type="Rhea" id="RHEA:20772"/>
        <dbReference type="ChEBI" id="CHEBI:15378"/>
        <dbReference type="ChEBI" id="CHEBI:15934"/>
        <dbReference type="ChEBI" id="CHEBI:57986"/>
        <dbReference type="ChEBI" id="CHEBI:58201"/>
        <dbReference type="EC" id="2.5.1.9"/>
    </reaction>
    <physiologicalReaction direction="left-to-right" evidence="4">
        <dbReference type="Rhea" id="RHEA:20773"/>
    </physiologicalReaction>
</comment>
<comment type="biophysicochemical properties">
    <kinetics>
        <KM evidence="2">5.7 uM for 6,7-dimethyl-8-(1-D-ribityl)lumazine (at pH 7.2 and 37 degrees Celsius)</KM>
        <Vmax evidence="2">158.0 nmol/min/mg enzyme for the formation of riboflavin (at pH 7.2 and 37 degrees Celsius)</Vmax>
    </kinetics>
</comment>
<comment type="pathway">
    <text evidence="4">Cofactor biosynthesis; riboflavin biosynthesis; riboflavin from 2-hydroxy-3-oxobutyl phosphate and 5-amino-6-(D-ribitylamino)uracil: step 2/2.</text>
</comment>
<comment type="subunit">
    <text evidence="2">Homotrimer.</text>
</comment>